<feature type="chain" id="PRO_0000439090" description="Putative anthocyanidin reductase">
    <location>
        <begin position="1"/>
        <end position="342"/>
    </location>
</feature>
<feature type="active site" description="Proton donor" evidence="3">
    <location>
        <position position="176"/>
    </location>
</feature>
<feature type="binding site" evidence="2">
    <location>
        <position position="44"/>
    </location>
    <ligand>
        <name>NADP(+)</name>
        <dbReference type="ChEBI" id="CHEBI:58349"/>
    </ligand>
</feature>
<feature type="binding site" evidence="2">
    <location>
        <position position="51"/>
    </location>
    <ligand>
        <name>NADP(+)</name>
        <dbReference type="ChEBI" id="CHEBI:58349"/>
    </ligand>
</feature>
<feature type="binding site" evidence="2">
    <location>
        <begin position="71"/>
        <end position="72"/>
    </location>
    <ligand>
        <name>NADP(+)</name>
        <dbReference type="ChEBI" id="CHEBI:58349"/>
    </ligand>
</feature>
<feature type="binding site" evidence="2">
    <location>
        <begin position="91"/>
        <end position="93"/>
    </location>
    <ligand>
        <name>NADP(+)</name>
        <dbReference type="ChEBI" id="CHEBI:58349"/>
    </ligand>
</feature>
<feature type="binding site" evidence="1">
    <location>
        <position position="172"/>
    </location>
    <ligand>
        <name>NADP(+)</name>
        <dbReference type="ChEBI" id="CHEBI:58349"/>
    </ligand>
</feature>
<feature type="binding site" evidence="2">
    <location>
        <position position="176"/>
    </location>
    <ligand>
        <name>NADP(+)</name>
        <dbReference type="ChEBI" id="CHEBI:58349"/>
    </ligand>
</feature>
<feature type="binding site" evidence="2">
    <location>
        <begin position="199"/>
        <end position="202"/>
    </location>
    <ligand>
        <name>NADP(+)</name>
        <dbReference type="ChEBI" id="CHEBI:58349"/>
    </ligand>
</feature>
<feature type="binding site" evidence="2">
    <location>
        <position position="214"/>
    </location>
    <ligand>
        <name>NADP(+)</name>
        <dbReference type="ChEBI" id="CHEBI:58349"/>
    </ligand>
</feature>
<name>ANR_GINBI</name>
<evidence type="ECO:0000250" key="1">
    <source>
        <dbReference type="UniProtKB" id="A0A059TC02"/>
    </source>
</evidence>
<evidence type="ECO:0000250" key="2">
    <source>
        <dbReference type="UniProtKB" id="P51110"/>
    </source>
</evidence>
<evidence type="ECO:0000250" key="3">
    <source>
        <dbReference type="UniProtKB" id="Q12068"/>
    </source>
</evidence>
<evidence type="ECO:0000250" key="4">
    <source>
        <dbReference type="UniProtKB" id="Q5FB34"/>
    </source>
</evidence>
<evidence type="ECO:0000269" key="5">
    <source>
    </source>
</evidence>
<evidence type="ECO:0000303" key="6">
    <source>
    </source>
</evidence>
<evidence type="ECO:0000305" key="7"/>
<evidence type="ECO:0000312" key="8">
    <source>
        <dbReference type="EMBL" id="AAU95082.1"/>
    </source>
</evidence>
<protein>
    <recommendedName>
        <fullName evidence="6">Putative anthocyanidin reductase</fullName>
        <shortName evidence="6">GbANR</shortName>
        <ecNumber evidence="4">1.3.1.-</ecNumber>
    </recommendedName>
</protein>
<proteinExistence type="evidence at transcript level"/>
<comment type="pathway">
    <text evidence="4">Secondary metabolite biosynthesis; flavonoid biosynthesis.</text>
</comment>
<comment type="tissue specificity">
    <text evidence="5">Highly expressed in leaves and weakly in stems. Not expressed in roots.</text>
</comment>
<comment type="similarity">
    <text evidence="7">Belongs to the NAD(P)-dependent epimerase/dehydratase family. Dihydroflavonol-4-reductase subfamily.</text>
</comment>
<sequence>MAPQAYPTAGQTTTVCVTGAAGFMASWLVKRLLEKGYIVHATVRDPENKAKVSHLLNLPGATDRLKLFRAELCEDGSFDAAVAGCNGVFHVATPTEFMPKDPENDLIKPAIEGTLNVLKSCTKVDSIKRVVVTSSAATVSINNSSEQNQYIDESCWTDVNFLTSQKPPGWAYPVSKTLAEQAALKYAEEHSLDVVTVIPVLVVGPAVTPTVPSSVELALSLITGDEFKMGALKGMQFVSGSISLVHIDDVCSAQIFLMEKPSAQGRYICFPVNTGIPQLAEFLSKRYPQYKVPTKFDDVPATPKLTISSQKLLDCGFSFKYGIEDIYDQAIEYMKTKGLLTC</sequence>
<dbReference type="EC" id="1.3.1.-" evidence="4"/>
<dbReference type="EMBL" id="AY750963">
    <property type="protein sequence ID" value="AAU95082.1"/>
    <property type="molecule type" value="mRNA"/>
</dbReference>
<dbReference type="SMR" id="Q5XLY0"/>
<dbReference type="UniPathway" id="UPA00154"/>
<dbReference type="GO" id="GO:0016616">
    <property type="term" value="F:oxidoreductase activity, acting on the CH-OH group of donors, NAD or NADP as acceptor"/>
    <property type="evidence" value="ECO:0007669"/>
    <property type="project" value="TreeGrafter"/>
</dbReference>
<dbReference type="GO" id="GO:0009813">
    <property type="term" value="P:flavonoid biosynthetic process"/>
    <property type="evidence" value="ECO:0000250"/>
    <property type="project" value="UniProtKB"/>
</dbReference>
<dbReference type="CDD" id="cd08958">
    <property type="entry name" value="FR_SDR_e"/>
    <property type="match status" value="1"/>
</dbReference>
<dbReference type="FunFam" id="3.40.50.720:FF:000085">
    <property type="entry name" value="Dihydroflavonol reductase"/>
    <property type="match status" value="1"/>
</dbReference>
<dbReference type="Gene3D" id="3.40.50.720">
    <property type="entry name" value="NAD(P)-binding Rossmann-like Domain"/>
    <property type="match status" value="1"/>
</dbReference>
<dbReference type="InterPro" id="IPR001509">
    <property type="entry name" value="Epimerase_deHydtase"/>
</dbReference>
<dbReference type="InterPro" id="IPR036291">
    <property type="entry name" value="NAD(P)-bd_dom_sf"/>
</dbReference>
<dbReference type="InterPro" id="IPR050425">
    <property type="entry name" value="NAD(P)_dehydrat-like"/>
</dbReference>
<dbReference type="PANTHER" id="PTHR10366:SF288">
    <property type="entry name" value="ANTHOCYANIDIN REDUCTASE"/>
    <property type="match status" value="1"/>
</dbReference>
<dbReference type="PANTHER" id="PTHR10366">
    <property type="entry name" value="NAD DEPENDENT EPIMERASE/DEHYDRATASE"/>
    <property type="match status" value="1"/>
</dbReference>
<dbReference type="Pfam" id="PF01370">
    <property type="entry name" value="Epimerase"/>
    <property type="match status" value="1"/>
</dbReference>
<dbReference type="SUPFAM" id="SSF51735">
    <property type="entry name" value="NAD(P)-binding Rossmann-fold domains"/>
    <property type="match status" value="1"/>
</dbReference>
<keyword id="KW-0284">Flavonoid biosynthesis</keyword>
<keyword id="KW-0521">NADP</keyword>
<keyword id="KW-0560">Oxidoreductase</keyword>
<organism evidence="8">
    <name type="scientific">Ginkgo biloba</name>
    <name type="common">Ginkgo</name>
    <name type="synonym">Maidenhair tree</name>
    <dbReference type="NCBI Taxonomy" id="3311"/>
    <lineage>
        <taxon>Eukaryota</taxon>
        <taxon>Viridiplantae</taxon>
        <taxon>Streptophyta</taxon>
        <taxon>Embryophyta</taxon>
        <taxon>Tracheophyta</taxon>
        <taxon>Spermatophyta</taxon>
        <taxon>Ginkgoidae</taxon>
        <taxon>Ginkgoales</taxon>
        <taxon>Ginkgoaceae</taxon>
        <taxon>Ginkgo</taxon>
    </lineage>
</organism>
<reference evidence="8" key="1">
    <citation type="journal article" date="2006" name="J. Plant Physiol.">
        <title>Isolation and characterization of a putative anthocyanidin reductase gene from Ginkgo biloba.</title>
        <authorList>
            <person name="Shen G.A."/>
            <person name="Pang Y."/>
            <person name="Wu W."/>
            <person name="Liu X."/>
            <person name="Zhao L."/>
            <person name="Sun X."/>
            <person name="Tang K."/>
        </authorList>
    </citation>
    <scope>NUCLEOTIDE SEQUENCE [MRNA]</scope>
    <scope>TISSUE SPECIFICITY</scope>
</reference>
<accession>Q5XLY0</accession>